<sequence length="1332" mass="152617">MTERIPIKNYQRTNAKALLKLTEKLFNKNFFDLYLTSQQLVVLEYLLSISSEEDKLKAWDYFLKGNIALNVEKSFPLTQEEEHHGAVSPAVDTRSDDVSSQTIKDNNNTNTNTSISNENHVENEIEDKGDNAIANEDNFVNNDESDNVEEDLFKLDLEDLKQQISGTRFIGNLSLKIRYVLWQCAIDYIYCDRNEFGDENDTEYTLLDVEEKEEEEIGKNEKPQNKEGISKFAEDEDYDDEDENYDEDSTDVKNVDDPPKNLDSISSSNIEIDDERRLVLNISISKETLSKLKTNNVEEIMGNWNKIYHSFEYDKETMIKRLKLEESDKMIEKGKKKRSRSDLEAATDEQDRENTNDEPDTNQKLPTPEGSTFSDTGNKRPKQSNLDLTVNLGIENLSLKHLLSSIQQKKSQLGISDYELKHLIMDVRKNRSKWTSDERIGQEELYEACEKVVLELRNYTEHSTPFLNKVSKREAPNYHQIIKKSMDLNTVLKKLKSFQYDSKQEFVDDIMLIWKNCLTYNSDPSHFLRGHAIAMQKKSLQLIRMIPNITIRNRADLEKEIEDMEKDKDYELDEEEEVAGSGRKGLNMGAHMLAKENGKVSEKDSSKTVKDEAPTNDDKLTSVIPEGEKEKDKTASSTVTVHENVNKNEIKENGKNEEQDMVEESSKTEDSSKDADAAKKDTEDGLQDKTAENKEAGENNEEEEDDDDEDEDEDMVDSQSYLLEKDDDRDDLEISVWKTVTAKVRAEICLKRTEYFKNGKLNSDSEAFLKNPQRMKRFDQLFLEYKEQKALESYRQKIEQNSIMKNGFGTVLKQEDDDQLQFHNDHSLNGNEAFEKQPNDIELDDTRFLQEYDISNAIPDIVYEGVNTKTLDKMEDASVDRMLQNGINKQSRFLANKDLGLTPKMNQNITLIQQIRHICHKISLIRMLQSPLSAQNSRSNPNAFLNNHIYNYTIIDDSLDIDPVSQLPTHDYKNNRELIWKFMHKNISKVAMANGFETAHPSAINMLTEIAGDYLSNLIKTLKLHHETNSLNRGTNVEMLQTTLLENGINRPDDLFSYVESEFGKKTKKLQDIKQKLESFLRALLRPTLQELSERNFEDESQSFFTGDFASELTGEDFFGFRELGLEKEFGVLSSSVPLQLLTTQFQTVDGETKVQAKKIQPEESDSIVYKKITKGMLDAGSFWNTLLPLLQKDYERSKAYIAKQSKSSANDKTSMTSTEDNSFALLEEDQFVSKKTATKARLPPTGKISTTYKKKPIASAFILPEEDLENDVKADPTTTVNAKVGAENDGDSSLFLRTPQPLDPLDMDDAFDDTNMGSNSSFSLSLPRLNQ</sequence>
<accession>P35177</accession>
<accession>D6VQ80</accession>
<evidence type="ECO:0000255" key="1">
    <source>
        <dbReference type="PROSITE-ProRule" id="PRU00035"/>
    </source>
</evidence>
<evidence type="ECO:0000256" key="2">
    <source>
        <dbReference type="SAM" id="MobiDB-lite"/>
    </source>
</evidence>
<evidence type="ECO:0000269" key="3">
    <source>
    </source>
</evidence>
<evidence type="ECO:0000269" key="4">
    <source>
    </source>
</evidence>
<evidence type="ECO:0000269" key="5">
    <source>
    </source>
</evidence>
<evidence type="ECO:0000269" key="6">
    <source>
    </source>
</evidence>
<evidence type="ECO:0000269" key="7">
    <source>
    </source>
</evidence>
<evidence type="ECO:0000269" key="8">
    <source>
    </source>
</evidence>
<evidence type="ECO:0000269" key="9">
    <source>
    </source>
</evidence>
<evidence type="ECO:0000269" key="10">
    <source>
    </source>
</evidence>
<evidence type="ECO:0000269" key="11">
    <source>
    </source>
</evidence>
<evidence type="ECO:0000269" key="12">
    <source>
    </source>
</evidence>
<evidence type="ECO:0000269" key="13">
    <source>
    </source>
</evidence>
<evidence type="ECO:0000269" key="14">
    <source>
    </source>
</evidence>
<evidence type="ECO:0000269" key="15">
    <source>
    </source>
</evidence>
<evidence type="ECO:0000269" key="16">
    <source>
    </source>
</evidence>
<evidence type="ECO:0000269" key="17">
    <source>
    </source>
</evidence>
<evidence type="ECO:0000269" key="18">
    <source>
    </source>
</evidence>
<evidence type="ECO:0000269" key="19">
    <source>
    </source>
</evidence>
<evidence type="ECO:0000269" key="20">
    <source>
    </source>
</evidence>
<evidence type="ECO:0000305" key="21">
    <source>
    </source>
</evidence>
<evidence type="ECO:0007744" key="22">
    <source>
        <dbReference type="PDB" id="6T9I"/>
    </source>
</evidence>
<evidence type="ECO:0007744" key="23">
    <source>
        <dbReference type="PDB" id="6T9K"/>
    </source>
</evidence>
<evidence type="ECO:0007744" key="24">
    <source>
    </source>
</evidence>
<evidence type="ECO:0007744" key="25">
    <source>
    </source>
</evidence>
<evidence type="ECO:0007744" key="26">
    <source>
    </source>
</evidence>
<evidence type="ECO:0007829" key="27">
    <source>
        <dbReference type="PDB" id="6T9K"/>
    </source>
</evidence>
<gene>
    <name type="primary">SPT7</name>
    <name type="ordered locus">YBR081C</name>
    <name type="ORF">YBR0739</name>
</gene>
<reference key="1">
    <citation type="journal article" date="1995" name="Genetics">
        <title>The Saccharomyces cerevisiae SPT7 gene encodes a very acidic protein important for transcription in vivo.</title>
        <authorList>
            <person name="Gansheroff L.J."/>
            <person name="Dollard C."/>
            <person name="Tan P."/>
            <person name="Winston F."/>
        </authorList>
    </citation>
    <scope>NUCLEOTIDE SEQUENCE [GENOMIC DNA]</scope>
    <source>
        <strain>ATCC 204508 / S288c</strain>
    </source>
</reference>
<reference key="2">
    <citation type="journal article" date="1994" name="Yeast">
        <title>Sequence analysis of a 31 kb DNA fragment from the right arm of Saccharomyces cerevisiae chromosome II.</title>
        <authorList>
            <person name="van der Aart Q.J.M."/>
            <person name="Barthe C."/>
            <person name="Doignon F."/>
            <person name="Aigle M."/>
            <person name="Crouzet M."/>
            <person name="Steensma H.Y."/>
        </authorList>
    </citation>
    <scope>NUCLEOTIDE SEQUENCE [GENOMIC DNA]</scope>
    <source>
        <strain>ATCC 204508 / S288c</strain>
    </source>
</reference>
<reference key="3">
    <citation type="journal article" date="1994" name="EMBO J.">
        <title>Complete DNA sequence of yeast chromosome II.</title>
        <authorList>
            <person name="Feldmann H."/>
            <person name="Aigle M."/>
            <person name="Aljinovic G."/>
            <person name="Andre B."/>
            <person name="Baclet M.C."/>
            <person name="Barthe C."/>
            <person name="Baur A."/>
            <person name="Becam A.-M."/>
            <person name="Biteau N."/>
            <person name="Boles E."/>
            <person name="Brandt T."/>
            <person name="Brendel M."/>
            <person name="Brueckner M."/>
            <person name="Bussereau F."/>
            <person name="Christiansen C."/>
            <person name="Contreras R."/>
            <person name="Crouzet M."/>
            <person name="Cziepluch C."/>
            <person name="Demolis N."/>
            <person name="Delaveau T."/>
            <person name="Doignon F."/>
            <person name="Domdey H."/>
            <person name="Duesterhus S."/>
            <person name="Dubois E."/>
            <person name="Dujon B."/>
            <person name="El Bakkoury M."/>
            <person name="Entian K.-D."/>
            <person name="Feuermann M."/>
            <person name="Fiers W."/>
            <person name="Fobo G.M."/>
            <person name="Fritz C."/>
            <person name="Gassenhuber J."/>
            <person name="Glansdorff N."/>
            <person name="Goffeau A."/>
            <person name="Grivell L.A."/>
            <person name="de Haan M."/>
            <person name="Hein C."/>
            <person name="Herbert C.J."/>
            <person name="Hollenberg C.P."/>
            <person name="Holmstroem K."/>
            <person name="Jacq C."/>
            <person name="Jacquet M."/>
            <person name="Jauniaux J.-C."/>
            <person name="Jonniaux J.-L."/>
            <person name="Kallesoee T."/>
            <person name="Kiesau P."/>
            <person name="Kirchrath L."/>
            <person name="Koetter P."/>
            <person name="Korol S."/>
            <person name="Liebl S."/>
            <person name="Logghe M."/>
            <person name="Lohan A.J.E."/>
            <person name="Louis E.J."/>
            <person name="Li Z.Y."/>
            <person name="Maat M.J."/>
            <person name="Mallet L."/>
            <person name="Mannhaupt G."/>
            <person name="Messenguy F."/>
            <person name="Miosga T."/>
            <person name="Molemans F."/>
            <person name="Mueller S."/>
            <person name="Nasr F."/>
            <person name="Obermaier B."/>
            <person name="Perea J."/>
            <person name="Pierard A."/>
            <person name="Piravandi E."/>
            <person name="Pohl F.M."/>
            <person name="Pohl T.M."/>
            <person name="Potier S."/>
            <person name="Proft M."/>
            <person name="Purnelle B."/>
            <person name="Ramezani Rad M."/>
            <person name="Rieger M."/>
            <person name="Rose M."/>
            <person name="Schaaff-Gerstenschlaeger I."/>
            <person name="Scherens B."/>
            <person name="Schwarzlose C."/>
            <person name="Skala J."/>
            <person name="Slonimski P.P."/>
            <person name="Smits P.H.M."/>
            <person name="Souciet J.-L."/>
            <person name="Steensma H.Y."/>
            <person name="Stucka R."/>
            <person name="Urrestarazu L.A."/>
            <person name="van der Aart Q.J.M."/>
            <person name="Van Dyck L."/>
            <person name="Vassarotti A."/>
            <person name="Vetter I."/>
            <person name="Vierendeels F."/>
            <person name="Vissers S."/>
            <person name="Wagner G."/>
            <person name="de Wergifosse P."/>
            <person name="Wolfe K.H."/>
            <person name="Zagulski M."/>
            <person name="Zimmermann F.K."/>
            <person name="Mewes H.-W."/>
            <person name="Kleine K."/>
        </authorList>
    </citation>
    <scope>NUCLEOTIDE SEQUENCE [LARGE SCALE GENOMIC DNA]</scope>
    <source>
        <strain>ATCC 204508 / S288c</strain>
    </source>
</reference>
<reference key="4">
    <citation type="journal article" date="2014" name="G3 (Bethesda)">
        <title>The reference genome sequence of Saccharomyces cerevisiae: Then and now.</title>
        <authorList>
            <person name="Engel S.R."/>
            <person name="Dietrich F.S."/>
            <person name="Fisk D.G."/>
            <person name="Binkley G."/>
            <person name="Balakrishnan R."/>
            <person name="Costanzo M.C."/>
            <person name="Dwight S.S."/>
            <person name="Hitz B.C."/>
            <person name="Karra K."/>
            <person name="Nash R.S."/>
            <person name="Weng S."/>
            <person name="Wong E.D."/>
            <person name="Lloyd P."/>
            <person name="Skrzypek M.S."/>
            <person name="Miyasato S.R."/>
            <person name="Simison M."/>
            <person name="Cherry J.M."/>
        </authorList>
    </citation>
    <scope>GENOME REANNOTATION</scope>
    <source>
        <strain>ATCC 204508 / S288c</strain>
    </source>
</reference>
<reference key="5">
    <citation type="journal article" date="1992" name="Nucleic Acids Res.">
        <title>The bromodomain: a conserved sequence found in human, Drosophila and yeast proteins.</title>
        <authorList>
            <person name="Haynes S.R."/>
            <person name="Dollard C."/>
            <person name="Winston F."/>
            <person name="Beck S."/>
            <person name="Trowsdale J."/>
            <person name="Dawid I.B."/>
        </authorList>
    </citation>
    <scope>NUCLEOTIDE SEQUENCE [GENOMIC DNA] OF 463-523</scope>
</reference>
<reference key="6">
    <citation type="journal article" date="1997" name="Genes Dev.">
        <title>Yeast Gcn5 functions in two multisubunit complexes to acetylate nucleosomal histones: characterization of an Ada complex and the SAGA (Spt/Ada) complex.</title>
        <authorList>
            <person name="Grant P.A."/>
            <person name="Duggan L."/>
            <person name="Cote J."/>
            <person name="Roberts S.M."/>
            <person name="Brownell J.E."/>
            <person name="Candau R."/>
            <person name="Ohba R."/>
            <person name="Owen-Hughes T."/>
            <person name="Allis C.D."/>
            <person name="Winston F."/>
            <person name="Berger S.L."/>
            <person name="Workman J.L."/>
        </authorList>
    </citation>
    <scope>IDENTIFICATION IN THE SAGA COMPLEX</scope>
</reference>
<reference key="7">
    <citation type="journal article" date="1998" name="Cell">
        <title>A subset of TAF(II)s are integral components of the SAGA complex required for nucleosome acetylation and transcriptional stimulation.</title>
        <authorList>
            <person name="Grant P.A."/>
            <person name="Schieltz D."/>
            <person name="Pray-Grant M.G."/>
            <person name="Steger D.J."/>
            <person name="Reese J.C."/>
            <person name="Yates J.R. III"/>
            <person name="Workman J.L."/>
        </authorList>
    </citation>
    <scope>IDENTIFICATION IN THE SAGA COMPLEX</scope>
    <scope>IDENTIFICATION BY MASS SPECTROMETRY</scope>
</reference>
<reference key="8">
    <citation type="journal article" date="1998" name="J. Biol. Chem.">
        <title>Tra1p is a component of the yeast Ada.Spt transcriptional regulatory complexes.</title>
        <authorList>
            <person name="Saleh A."/>
            <person name="Schieltz D."/>
            <person name="Ting N."/>
            <person name="McMahon S.B."/>
            <person name="Litchfield D.W."/>
            <person name="Yates J.R. III"/>
            <person name="Lees-Miller S.P."/>
            <person name="Cole M.D."/>
            <person name="Brandl C.J."/>
        </authorList>
    </citation>
    <scope>IDENTIFICATION IN A COMPLEX WITH ADA3 AND TRA1</scope>
</reference>
<reference key="9">
    <citation type="journal article" date="1998" name="Mol. Cell">
        <title>The ATM-related cofactor Tra1 is a component of the purified SAGA complex.</title>
        <authorList>
            <person name="Grant P.A."/>
            <person name="Schieltz D."/>
            <person name="Pray-Grant M.G."/>
            <person name="Yates J.R. III"/>
            <person name="Workman J.L."/>
        </authorList>
    </citation>
    <scope>IDENTIFICATION IN A SAGA COMPLEX WITH SPT2; HFI1; SPT8; GCN5; SPT20; ADA2; ADA3 AND TRA1</scope>
</reference>
<reference key="10">
    <citation type="journal article" date="1999" name="J. Biol. Chem.">
        <title>Expanded lysine acetylation specificity of Gcn5 in native complexes.</title>
        <authorList>
            <person name="Grant P.A."/>
            <person name="Eberharter A."/>
            <person name="John S."/>
            <person name="Cook R.G."/>
            <person name="Turner B.M."/>
            <person name="Workman J.L."/>
        </authorList>
    </citation>
    <scope>FUNCTION IN HISTONE ACETYLATION AT THE SAGA COMPLEX</scope>
</reference>
<reference key="11">
    <citation type="journal article" date="1999" name="Mol. Cell. Biol.">
        <title>Functional organization of the yeast SAGA complex: distinct components involved in structural integrity, nucleosome acetylation, and TATA-binding protein interaction.</title>
        <authorList>
            <person name="Sterner D.E."/>
            <person name="Grant P.A."/>
            <person name="Roberts S.M."/>
            <person name="Duggan L.J."/>
            <person name="Belotserkovskaya R."/>
            <person name="Pacella L.A."/>
            <person name="Winston F."/>
            <person name="Workman J.L."/>
            <person name="Berger S.L."/>
        </authorList>
    </citation>
    <scope>FUNCTION</scope>
</reference>
<reference key="12">
    <citation type="journal article" date="2000" name="Nature">
        <title>Redundant roles for the TFIID and SAGA complexes in global transcription.</title>
        <authorList>
            <person name="Lee T.I."/>
            <person name="Causton H.C."/>
            <person name="Holstege F.C."/>
            <person name="Shen W.C."/>
            <person name="Hannett N."/>
            <person name="Jennings E.G."/>
            <person name="Winston F."/>
            <person name="Green M.R."/>
            <person name="Young R.A."/>
        </authorList>
    </citation>
    <scope>FUNCTION</scope>
</reference>
<reference key="13">
    <citation type="journal article" date="2002" name="Mol. Cell. Biol.">
        <title>Analysis of Spt7 function in the Saccharomyces cerevisiae SAGA coactivator complex.</title>
        <authorList>
            <person name="Wu P.Y."/>
            <person name="Winston F."/>
        </authorList>
    </citation>
    <scope>FUNCTION</scope>
</reference>
<reference key="14">
    <citation type="journal article" date="2002" name="Mol. Cell. Biol.">
        <title>The novel SLIK histone acetyltransferase complex functions in the yeast retrograde response pathway.</title>
        <authorList>
            <person name="Pray-Grant M.G."/>
            <person name="Schieltz D."/>
            <person name="McMahon S.J."/>
            <person name="Wood J.M."/>
            <person name="Kennedy E.L."/>
            <person name="Cook R.G."/>
            <person name="Workman J.L."/>
            <person name="Yates J.R. III"/>
            <person name="Grant P.A."/>
        </authorList>
    </citation>
    <scope>IDENTIFICATION IN THE SLIK COMPLEX</scope>
</reference>
<reference key="15">
    <citation type="journal article" date="2002" name="Proc. Natl. Acad. Sci. U.S.A.">
        <title>SALSA, a variant of yeast SAGA, contains truncated Spt7, which correlates with activated transcription.</title>
        <authorList>
            <person name="Sterner D.E."/>
            <person name="Belotserkovskaya R."/>
            <person name="Berger S.L."/>
        </authorList>
    </citation>
    <scope>IDENTIFICATION IN THE SALSA COMPLEX</scope>
    <scope>MUTANTS SPT7-217 AND SPT7-223</scope>
</reference>
<reference key="16">
    <citation type="journal article" date="2003" name="Nature">
        <title>Global analysis of protein expression in yeast.</title>
        <authorList>
            <person name="Ghaemmaghami S."/>
            <person name="Huh W.-K."/>
            <person name="Bower K."/>
            <person name="Howson R.W."/>
            <person name="Belle A."/>
            <person name="Dephoure N."/>
            <person name="O'Shea E.K."/>
            <person name="Weissman J.S."/>
        </authorList>
    </citation>
    <scope>LEVEL OF PROTEIN EXPRESSION [LARGE SCALE ANALYSIS]</scope>
</reference>
<reference key="17">
    <citation type="journal article" date="2005" name="Nature">
        <title>Chd1 chromodomain links histone H3 methylation with SAGA- and SLIK-dependent acetylation.</title>
        <authorList>
            <person name="Pray-Grant M.G."/>
            <person name="Daniel J.A."/>
            <person name="Schieltz D."/>
            <person name="Yates J.R. III"/>
            <person name="Grant P.A."/>
        </authorList>
    </citation>
    <scope>IDENTIFICATION IN THE SLIK COMPLEX</scope>
    <scope>SUBCELLULAR LOCATION</scope>
</reference>
<reference key="18">
    <citation type="journal article" date="2007" name="J. Proteome Res.">
        <title>Large-scale phosphorylation analysis of alpha-factor-arrested Saccharomyces cerevisiae.</title>
        <authorList>
            <person name="Li X."/>
            <person name="Gerber S.A."/>
            <person name="Rudner A.D."/>
            <person name="Beausoleil S.A."/>
            <person name="Haas W."/>
            <person name="Villen J."/>
            <person name="Elias J.E."/>
            <person name="Gygi S.P."/>
        </authorList>
    </citation>
    <scope>PHOSPHORYLATION [LARGE SCALE ANALYSIS] AT SER-88</scope>
    <scope>IDENTIFICATION BY MASS SPECTROMETRY [LARGE SCALE ANALYSIS]</scope>
    <source>
        <strain>ADR376</strain>
    </source>
</reference>
<reference key="19">
    <citation type="journal article" date="2008" name="Mol. Cell. Proteomics">
        <title>A multidimensional chromatography technology for in-depth phosphoproteome analysis.</title>
        <authorList>
            <person name="Albuquerque C.P."/>
            <person name="Smolka M.B."/>
            <person name="Payne S.H."/>
            <person name="Bafna V."/>
            <person name="Eng J."/>
            <person name="Zhou H."/>
        </authorList>
    </citation>
    <scope>PHOSPHORYLATION [LARGE SCALE ANALYSIS] AT THR-78 AND SER-88</scope>
    <scope>IDENTIFICATION BY MASS SPECTROMETRY [LARGE SCALE ANALYSIS]</scope>
</reference>
<reference key="20">
    <citation type="journal article" date="2009" name="Science">
        <title>Global analysis of Cdk1 substrate phosphorylation sites provides insights into evolution.</title>
        <authorList>
            <person name="Holt L.J."/>
            <person name="Tuch B.B."/>
            <person name="Villen J."/>
            <person name="Johnson A.D."/>
            <person name="Gygi S.P."/>
            <person name="Morgan D.O."/>
        </authorList>
    </citation>
    <scope>PHOSPHORYLATION [LARGE SCALE ANALYSIS] AT SER-1293</scope>
    <scope>IDENTIFICATION BY MASS SPECTROMETRY [LARGE SCALE ANALYSIS]</scope>
</reference>
<reference key="21">
    <citation type="journal article" date="2010" name="J. Biol. Chem.">
        <title>Identification of Pep4p as the protease responsible for formation of the SAGA-related SLIK protein complex.</title>
        <authorList>
            <person name="Spedale G."/>
            <person name="Mischerikow N."/>
            <person name="Heck A.J."/>
            <person name="Timmers H.T."/>
            <person name="Pijnappel W.W."/>
        </authorList>
    </citation>
    <scope>PROTEOLYTIC CLEAVAGE</scope>
</reference>
<reference key="22">
    <citation type="journal article" date="2014" name="EMBO J.">
        <title>Architecture of the Saccharomyces cerevisiae SAGA transcription coactivator complex.</title>
        <authorList>
            <person name="Han Y."/>
            <person name="Luo J."/>
            <person name="Ranish J."/>
            <person name="Hahn S."/>
        </authorList>
    </citation>
    <scope>SUBUNIT</scope>
</reference>
<reference key="23">
    <citation type="journal article" date="2017" name="Mol. Cell">
        <title>SAGA is a general cofactor for RNA polymerase II transcription.</title>
        <authorList>
            <person name="Baptista T."/>
            <person name="Gruenberg S."/>
            <person name="Minoungou N."/>
            <person name="Koster M.J.E."/>
            <person name="Timmers H.T.M."/>
            <person name="Hahn S."/>
            <person name="Devys D."/>
            <person name="Tora L."/>
        </authorList>
    </citation>
    <scope>FUNCTION</scope>
</reference>
<reference key="24">
    <citation type="journal article" date="2021" name="J. Biol. Chem.">
        <title>SAGA and SAGA-like SLIK transcriptional coactivators are structurally and biochemically equivalent.</title>
        <authorList>
            <person name="Adamus K."/>
            <person name="Reboul C."/>
            <person name="Voss J."/>
            <person name="Huang C."/>
            <person name="Schittenhelm R.B."/>
            <person name="Le S.N."/>
            <person name="Ellisdon A.M."/>
            <person name="Elmlund H."/>
            <person name="Boudes M."/>
            <person name="Elmlund D."/>
        </authorList>
    </citation>
    <scope>FUNCTION</scope>
    <scope>SUBUNIT</scope>
</reference>
<reference key="25">
    <citation type="journal article" date="2004" name="Mol. Cell">
        <title>Molecular architecture of the S. cerevisiae SAGA complex.</title>
        <authorList>
            <person name="Wu P.Y."/>
            <person name="Ruhlmann C."/>
            <person name="Winston F."/>
            <person name="Schultz P."/>
        </authorList>
    </citation>
    <scope>3D-STRUCTURE MODELING OF THE SAGA COMPLEX</scope>
</reference>
<reference key="26">
    <citation type="journal article" date="2020" name="J. Cell Sci.">
        <title>Passive diffusion through nuclear pore complexes regulates levels of the yeast SAGA and SLIK coactivator complexes.</title>
        <authorList>
            <person name="Makio T."/>
            <person name="Wozniak R.W."/>
        </authorList>
    </citation>
    <scope>PROTEOLYTIC CLEAVAGE</scope>
</reference>
<reference evidence="22 23" key="27">
    <citation type="journal article" date="2020" name="Nature">
        <title>Structure of the transcription coactivator SAGA.</title>
        <authorList>
            <person name="Wang H."/>
            <person name="Dienemann C."/>
            <person name="Stutzer A."/>
            <person name="Urlaub H."/>
            <person name="Cheung A.C.M."/>
            <person name="Cramer P."/>
        </authorList>
    </citation>
    <scope>STRUCTURE BY ELECTRON MICROSCOPY (3.30 ANGSTROMS) IN THE SAGA COMPLEX</scope>
</reference>
<proteinExistence type="evidence at protein level"/>
<protein>
    <recommendedName>
        <fullName>SAGA complex subunit SPT7</fullName>
    </recommendedName>
    <alternativeName>
        <fullName>Suppressor of Ty protein 7</fullName>
    </alternativeName>
    <alternativeName>
        <fullName>Transcriptional activator SPT7</fullName>
    </alternativeName>
</protein>
<name>SPT7_YEAST</name>
<feature type="chain" id="PRO_0000211214" description="SAGA complex subunit SPT7">
    <location>
        <begin position="1"/>
        <end position="1332"/>
    </location>
</feature>
<feature type="domain" description="Bromo" evidence="1">
    <location>
        <begin position="440"/>
        <end position="546"/>
    </location>
</feature>
<feature type="region of interest" description="Disordered" evidence="2">
    <location>
        <begin position="80"/>
        <end position="118"/>
    </location>
</feature>
<feature type="region of interest" description="Disordered" evidence="2">
    <location>
        <begin position="209"/>
        <end position="268"/>
    </location>
</feature>
<feature type="region of interest" description="Disordered" evidence="2">
    <location>
        <begin position="331"/>
        <end position="384"/>
    </location>
</feature>
<feature type="region of interest" description="Disordered" evidence="2">
    <location>
        <begin position="566"/>
        <end position="724"/>
    </location>
</feature>
<feature type="region of interest" description="Disordered" evidence="2">
    <location>
        <begin position="1286"/>
        <end position="1332"/>
    </location>
</feature>
<feature type="compositionally biased region" description="Low complexity" evidence="2">
    <location>
        <begin position="106"/>
        <end position="118"/>
    </location>
</feature>
<feature type="compositionally biased region" description="Basic and acidic residues" evidence="2">
    <location>
        <begin position="217"/>
        <end position="233"/>
    </location>
</feature>
<feature type="compositionally biased region" description="Acidic residues" evidence="2">
    <location>
        <begin position="234"/>
        <end position="249"/>
    </location>
</feature>
<feature type="compositionally biased region" description="Basic and acidic residues" evidence="2">
    <location>
        <begin position="250"/>
        <end position="260"/>
    </location>
</feature>
<feature type="compositionally biased region" description="Acidic residues" evidence="2">
    <location>
        <begin position="345"/>
        <end position="360"/>
    </location>
</feature>
<feature type="compositionally biased region" description="Polar residues" evidence="2">
    <location>
        <begin position="362"/>
        <end position="376"/>
    </location>
</feature>
<feature type="compositionally biased region" description="Acidic residues" evidence="2">
    <location>
        <begin position="566"/>
        <end position="578"/>
    </location>
</feature>
<feature type="compositionally biased region" description="Basic and acidic residues" evidence="2">
    <location>
        <begin position="593"/>
        <end position="634"/>
    </location>
</feature>
<feature type="compositionally biased region" description="Basic and acidic residues" evidence="2">
    <location>
        <begin position="644"/>
        <end position="697"/>
    </location>
</feature>
<feature type="compositionally biased region" description="Acidic residues" evidence="2">
    <location>
        <begin position="698"/>
        <end position="716"/>
    </location>
</feature>
<feature type="compositionally biased region" description="Polar residues" evidence="2">
    <location>
        <begin position="1316"/>
        <end position="1332"/>
    </location>
</feature>
<feature type="modified residue" description="Phosphothreonine; by ATM or ATR" evidence="25">
    <location>
        <position position="78"/>
    </location>
</feature>
<feature type="modified residue" description="Phosphoserine" evidence="24 25">
    <location>
        <position position="88"/>
    </location>
</feature>
<feature type="modified residue" description="Phosphoserine" evidence="26">
    <location>
        <position position="1293"/>
    </location>
</feature>
<feature type="mutagenesis site" description="In spt7-223; removes the C-terminal histone fold, leading to the same phenotype as a deletion mutation." evidence="6">
    <location>
        <begin position="843"/>
        <end position="1332"/>
    </location>
</feature>
<feature type="mutagenesis site" description="In spt7-217; mimiks the processed form of SPT7. Leads to a shifted profile with the predominant form of the SPT module now abundant in SALSA/SLIK, and a significantly reduced amount of SAGA." evidence="6">
    <original>GFRELGLEKEFGVLSSSVPLQLLTTQFQTVDGETKVQAKKIQPEESDSIVYKKITKGMLDAGSFWNTLLPLLQKDYERSKAYIAKQSKSSANDKTSMTSTEDNSFALLEEDQFVSKKTATKARLPPTGKISTTYKKKPIASAFILPEEDLENDVKADPTTTVNAKVGAENDGDSSLFLRTPQPLDPLDMDDAFDDTNMGSNSSFSLSLPRLNQ</original>
    <variation>VLESLD</variation>
    <location>
        <begin position="1120"/>
        <end position="1332"/>
    </location>
</feature>
<feature type="helix" evidence="27">
    <location>
        <begin position="153"/>
        <end position="162"/>
    </location>
</feature>
<feature type="helix" evidence="27">
    <location>
        <begin position="168"/>
        <end position="184"/>
    </location>
</feature>
<feature type="helix" evidence="27">
    <location>
        <begin position="732"/>
        <end position="740"/>
    </location>
</feature>
<feature type="turn" evidence="27">
    <location>
        <begin position="741"/>
        <end position="743"/>
    </location>
</feature>
<feature type="helix" evidence="27">
    <location>
        <begin position="744"/>
        <end position="752"/>
    </location>
</feature>
<feature type="strand" evidence="27">
    <location>
        <begin position="854"/>
        <end position="856"/>
    </location>
</feature>
<feature type="helix" evidence="27">
    <location>
        <begin position="869"/>
        <end position="883"/>
    </location>
</feature>
<feature type="strand" evidence="27">
    <location>
        <begin position="899"/>
        <end position="901"/>
    </location>
</feature>
<feature type="helix" evidence="27">
    <location>
        <begin position="902"/>
        <end position="915"/>
    </location>
</feature>
<feature type="helix" evidence="27">
    <location>
        <begin position="918"/>
        <end position="928"/>
    </location>
</feature>
<feature type="turn" evidence="27">
    <location>
        <begin position="963"/>
        <end position="966"/>
    </location>
</feature>
<feature type="helix" evidence="27">
    <location>
        <begin position="976"/>
        <end position="988"/>
    </location>
</feature>
<feature type="turn" evidence="27">
    <location>
        <begin position="992"/>
        <end position="995"/>
    </location>
</feature>
<feature type="helix" evidence="27">
    <location>
        <begin position="1001"/>
        <end position="1026"/>
    </location>
</feature>
<feature type="helix" evidence="27">
    <location>
        <begin position="1036"/>
        <end position="1045"/>
    </location>
</feature>
<feature type="strand" evidence="27">
    <location>
        <begin position="1050"/>
        <end position="1052"/>
    </location>
</feature>
<feature type="helix" evidence="27">
    <location>
        <begin position="1054"/>
        <end position="1063"/>
    </location>
</feature>
<feature type="helix" evidence="27">
    <location>
        <begin position="1066"/>
        <end position="1084"/>
    </location>
</feature>
<keyword id="KW-0002">3D-structure</keyword>
<keyword id="KW-0010">Activator</keyword>
<keyword id="KW-0103">Bromodomain</keyword>
<keyword id="KW-0539">Nucleus</keyword>
<keyword id="KW-0597">Phosphoprotein</keyword>
<keyword id="KW-1185">Reference proteome</keyword>
<keyword id="KW-0804">Transcription</keyword>
<keyword id="KW-0805">Transcription regulation</keyword>
<organism>
    <name type="scientific">Saccharomyces cerevisiae (strain ATCC 204508 / S288c)</name>
    <name type="common">Baker's yeast</name>
    <dbReference type="NCBI Taxonomy" id="559292"/>
    <lineage>
        <taxon>Eukaryota</taxon>
        <taxon>Fungi</taxon>
        <taxon>Dikarya</taxon>
        <taxon>Ascomycota</taxon>
        <taxon>Saccharomycotina</taxon>
        <taxon>Saccharomycetes</taxon>
        <taxon>Saccharomycetales</taxon>
        <taxon>Saccharomycetaceae</taxon>
        <taxon>Saccharomyces</taxon>
    </lineage>
</organism>
<comment type="function">
    <text evidence="3 4 5 6 7 11 12 13 15 19">Component of the transcription coactivator SAGA complex. SAGA acts as a general cofactor required for essentially all RNA polymerase II transcription (PubMed:10864329, PubMed:25216679, PubMed:28918903). At the promoters, SAGA is required for transcription pre-initiation complex (PIC) recruitment. It influences RNA polymerase II transcriptional activity through different activities such as TBP interaction (via core/TAF module) and promoter selectivity, interaction with transcription activators (via Tra1/SPT module), and chromatin modification through histone acetylation (via HAT module) and deubiquitination (via DUB module) (PubMed:31969703, PubMed:9858534). SAGA preferentially acetylates histones H3 (to form H3K9ac, H3K14ac, H3K18ac and H3K23ac) and H2B and deubiquitinates histone H2B (PubMed:10026213). SAGA interacts with DNA via upstream activating sequences (UASs) (PubMed:28918903). Also identified in a modified version of SAGA named SALSA or SLIK (PubMed:12101232, PubMed:12186975, PubMed:12446794). The cleavage of SPT7 and the absence of the SPT8 subunit in SLIK neither drive any major conformational differences in its structure compared with SAGA, nor significantly affect HAT, DUB, or DNA-binding activities (PubMed:33864814).</text>
</comment>
<comment type="subunit">
    <text evidence="6 7 9 10 11 13 15 16 17 18 20">Component of the 1.8 MDa SAGA (Spt-Ada-Gcn5 acetyltransferase) complex, which is composed of 19 subunits TRA1, SPT7, TAF5, NGG1/ADA3, SGF73, SPT20/ADA5, SPT8, TAF12, TAF6, HFI1/ADA1, UBP8, GCN5, ADA2, SPT3, SGF29, TAF10, TAF9, SGF11 and SUS1 (PubMed:31969703, PubMed:9224714, PubMed:9674426, PubMed:9885573). The SAGA complex is composed of 4 modules, namely the HAT (histone acetyltransferase) module (GCN5, ADA2, NGG1/ADA3 and SGF29), the DUB (deubiquitinating) module (UBP8, SGF11, SGF73 and SUS1), the core or TAF (TBP-associated factor) module (TAF5, TAF6, TAF9, TAF10 and TAF12), and the Tra1 or SPT (Suppressor of Ty) module (TRA1, HFI1/ADA1, SPT3, SPT7, SPT8 and SPT20/ADA5). The Tra1/SPT module binds activators, the core module recruits TBP (TATA-binding protein), the HAT module contains the histone H3 acetyltransferase GCN5, and the DUB module comprises the histone H2B deubiquitinase UBP8 (PubMed:25216679, PubMed:31969703). Also identified in an altered form of SAGA, named SALSA (SAGA altered, Spt8 absent) or SLIK (SAGA-like) complex, which contains a C-terminal truncated form of SPT7 and is missing SPT8 (PubMed:12186975, PubMed:12446794, PubMed:15647753, PubMed:20498363). However, it has been shown that the SAGA and SAGA-like SALSA/SLIK transcriptional coactivators are structurally and biochemically equivalent (PubMed:33864814). Identified in the Ada.spt complex with NGG1/ADA3 and TRA1 (PubMed:9756893).</text>
</comment>
<comment type="interaction">
    <interactant intactId="EBI-17958">
        <id>P35177</id>
    </interactant>
    <interactant intactId="EBI-8287">
        <id>Q12060</id>
        <label>HFI1</label>
    </interactant>
    <organismsDiffer>false</organismsDiffer>
    <experiments>16</experiments>
</comment>
<comment type="interaction">
    <interactant intactId="EBI-17958">
        <id>P35177</id>
    </interactant>
    <interactant intactId="EBI-16322">
        <id>P32608</id>
        <label>RTG2</label>
    </interactant>
    <organismsDiffer>false</organismsDiffer>
    <experiments>2</experiments>
</comment>
<comment type="interaction">
    <interactant intactId="EBI-17958">
        <id>P35177</id>
    </interactant>
    <interactant intactId="EBI-17964">
        <id>P38915</id>
        <label>SPT8</label>
    </interactant>
    <organismsDiffer>false</organismsDiffer>
    <experiments>14</experiments>
</comment>
<comment type="interaction">
    <interactant intactId="EBI-17958">
        <id>P35177</id>
    </interactant>
    <interactant intactId="EBI-24638">
        <id>P38811</id>
        <label>TRA1</label>
    </interactant>
    <organismsDiffer>false</organismsDiffer>
    <experiments>11</experiments>
</comment>
<comment type="subcellular location">
    <subcellularLocation>
        <location evidence="21">Nucleus</location>
    </subcellularLocation>
</comment>
<comment type="PTM">
    <text evidence="10 14">Protease PEP4 directly cleaves the C-terminus of SPT7(SAGA) to form SPT7(SLIK) within the SAGA complex in the nucleus.</text>
</comment>
<comment type="miscellaneous">
    <text evidence="8">Present with 2360 molecules/cell in log phase SD medium.</text>
</comment>
<dbReference type="EMBL" id="L22537">
    <property type="protein sequence ID" value="AAC37424.1"/>
    <property type="molecule type" value="Genomic_DNA"/>
</dbReference>
<dbReference type="EMBL" id="X76294">
    <property type="protein sequence ID" value="CAA53940.1"/>
    <property type="molecule type" value="Genomic_DNA"/>
</dbReference>
<dbReference type="EMBL" id="Z35950">
    <property type="protein sequence ID" value="CAA85026.1"/>
    <property type="molecule type" value="Genomic_DNA"/>
</dbReference>
<dbReference type="EMBL" id="M87651">
    <property type="protein sequence ID" value="AAA35087.1"/>
    <property type="molecule type" value="Genomic_DNA"/>
</dbReference>
<dbReference type="EMBL" id="BK006936">
    <property type="protein sequence ID" value="DAA07200.1"/>
    <property type="molecule type" value="Genomic_DNA"/>
</dbReference>
<dbReference type="PIR" id="S41552">
    <property type="entry name" value="S41552"/>
</dbReference>
<dbReference type="RefSeq" id="NP_009637.1">
    <property type="nucleotide sequence ID" value="NM_001178429.1"/>
</dbReference>
<dbReference type="PDB" id="6T9I">
    <property type="method" value="EM"/>
    <property type="resolution" value="3.90 A"/>
    <property type="chains" value="K=1-1332"/>
</dbReference>
<dbReference type="PDB" id="6T9K">
    <property type="method" value="EM"/>
    <property type="resolution" value="3.30 A"/>
    <property type="chains" value="K=1-1332"/>
</dbReference>
<dbReference type="PDBsum" id="6T9I"/>
<dbReference type="PDBsum" id="6T9K"/>
<dbReference type="EMDB" id="EMD-10412"/>
<dbReference type="EMDB" id="EMD-10414"/>
<dbReference type="SMR" id="P35177"/>
<dbReference type="BioGRID" id="32783">
    <property type="interactions" value="260"/>
</dbReference>
<dbReference type="ComplexPortal" id="CPX-656">
    <property type="entry name" value="SAGA complex"/>
</dbReference>
<dbReference type="ComplexPortal" id="CPX-675">
    <property type="entry name" value="SLIK (SAGA-like) complex"/>
</dbReference>
<dbReference type="DIP" id="DIP-771N"/>
<dbReference type="FunCoup" id="P35177">
    <property type="interactions" value="643"/>
</dbReference>
<dbReference type="IntAct" id="P35177">
    <property type="interactions" value="203"/>
</dbReference>
<dbReference type="MINT" id="P35177"/>
<dbReference type="STRING" id="4932.YBR081C"/>
<dbReference type="iPTMnet" id="P35177"/>
<dbReference type="PaxDb" id="4932-YBR081C"/>
<dbReference type="PeptideAtlas" id="P35177"/>
<dbReference type="EnsemblFungi" id="YBR081C_mRNA">
    <property type="protein sequence ID" value="YBR081C"/>
    <property type="gene ID" value="YBR081C"/>
</dbReference>
<dbReference type="GeneID" id="852373"/>
<dbReference type="KEGG" id="sce:YBR081C"/>
<dbReference type="AGR" id="SGD:S000000285"/>
<dbReference type="SGD" id="S000000285">
    <property type="gene designation" value="SPT7"/>
</dbReference>
<dbReference type="VEuPathDB" id="FungiDB:YBR081C"/>
<dbReference type="eggNOG" id="KOG1472">
    <property type="taxonomic scope" value="Eukaryota"/>
</dbReference>
<dbReference type="HOGENOM" id="CLU_006198_0_1_1"/>
<dbReference type="InParanoid" id="P35177"/>
<dbReference type="OMA" id="RHICHKI"/>
<dbReference type="OrthoDB" id="21449at2759"/>
<dbReference type="BioCyc" id="YEAST:G3O-29049-MONOMER"/>
<dbReference type="BioGRID-ORCS" id="852373">
    <property type="hits" value="8 hits in 10 CRISPR screens"/>
</dbReference>
<dbReference type="ChiTaRS" id="SPT7">
    <property type="organism name" value="yeast"/>
</dbReference>
<dbReference type="PRO" id="PR:P35177"/>
<dbReference type="Proteomes" id="UP000002311">
    <property type="component" value="Chromosome II"/>
</dbReference>
<dbReference type="RNAct" id="P35177">
    <property type="molecule type" value="protein"/>
</dbReference>
<dbReference type="GO" id="GO:0005739">
    <property type="term" value="C:mitochondrion"/>
    <property type="evidence" value="ECO:0007005"/>
    <property type="project" value="SGD"/>
</dbReference>
<dbReference type="GO" id="GO:0005634">
    <property type="term" value="C:nucleus"/>
    <property type="evidence" value="ECO:0000303"/>
    <property type="project" value="ComplexPortal"/>
</dbReference>
<dbReference type="GO" id="GO:0000124">
    <property type="term" value="C:SAGA complex"/>
    <property type="evidence" value="ECO:0000314"/>
    <property type="project" value="SGD"/>
</dbReference>
<dbReference type="GO" id="GO:0046695">
    <property type="term" value="C:SLIK (SAGA-like) complex"/>
    <property type="evidence" value="ECO:0000314"/>
    <property type="project" value="SGD"/>
</dbReference>
<dbReference type="GO" id="GO:0046982">
    <property type="term" value="F:protein heterodimerization activity"/>
    <property type="evidence" value="ECO:0007669"/>
    <property type="project" value="InterPro"/>
</dbReference>
<dbReference type="GO" id="GO:0005198">
    <property type="term" value="F:structural molecule activity"/>
    <property type="evidence" value="ECO:0000314"/>
    <property type="project" value="SGD"/>
</dbReference>
<dbReference type="GO" id="GO:0006325">
    <property type="term" value="P:chromatin organization"/>
    <property type="evidence" value="ECO:0000314"/>
    <property type="project" value="SGD"/>
</dbReference>
<dbReference type="GO" id="GO:0000747">
    <property type="term" value="P:conjugation with cellular fusion"/>
    <property type="evidence" value="ECO:0000315"/>
    <property type="project" value="SGD"/>
</dbReference>
<dbReference type="GO" id="GO:0065003">
    <property type="term" value="P:protein-containing complex assembly"/>
    <property type="evidence" value="ECO:0000315"/>
    <property type="project" value="SGD"/>
</dbReference>
<dbReference type="GO" id="GO:0006357">
    <property type="term" value="P:regulation of transcription by RNA polymerase II"/>
    <property type="evidence" value="ECO:0000314"/>
    <property type="project" value="ComplexPortal"/>
</dbReference>
<dbReference type="CDD" id="cd05510">
    <property type="entry name" value="Bromo_SPT7_like"/>
    <property type="match status" value="1"/>
</dbReference>
<dbReference type="CDD" id="cd22927">
    <property type="entry name" value="HFD_SPT7"/>
    <property type="match status" value="1"/>
</dbReference>
<dbReference type="FunFam" id="1.10.20.10:FF:000101">
    <property type="entry name" value="Transcriptional activator SPT7"/>
    <property type="match status" value="1"/>
</dbReference>
<dbReference type="FunFam" id="1.20.920.10:FF:000032">
    <property type="entry name" value="Transcriptional activator spt7"/>
    <property type="match status" value="1"/>
</dbReference>
<dbReference type="Gene3D" id="1.20.920.10">
    <property type="entry name" value="Bromodomain-like"/>
    <property type="match status" value="1"/>
</dbReference>
<dbReference type="Gene3D" id="1.10.20.10">
    <property type="entry name" value="Histone, subunit A"/>
    <property type="match status" value="1"/>
</dbReference>
<dbReference type="InterPro" id="IPR001487">
    <property type="entry name" value="Bromodomain"/>
</dbReference>
<dbReference type="InterPro" id="IPR036427">
    <property type="entry name" value="Bromodomain-like_sf"/>
</dbReference>
<dbReference type="InterPro" id="IPR018359">
    <property type="entry name" value="Bromodomain_CS"/>
</dbReference>
<dbReference type="InterPro" id="IPR009072">
    <property type="entry name" value="Histone-fold"/>
</dbReference>
<dbReference type="InterPro" id="IPR037782">
    <property type="entry name" value="Spt7"/>
</dbReference>
<dbReference type="PANTHER" id="PTHR47343">
    <property type="entry name" value="TRANSCRIPTIONAL ACTIVATOR SPT7"/>
    <property type="match status" value="1"/>
</dbReference>
<dbReference type="PANTHER" id="PTHR47343:SF1">
    <property type="entry name" value="TRANSCRIPTIONAL ACTIVATOR SPT7"/>
    <property type="match status" value="1"/>
</dbReference>
<dbReference type="Pfam" id="PF00439">
    <property type="entry name" value="Bromodomain"/>
    <property type="match status" value="1"/>
</dbReference>
<dbReference type="PRINTS" id="PR00503">
    <property type="entry name" value="BROMODOMAIN"/>
</dbReference>
<dbReference type="SMART" id="SM00297">
    <property type="entry name" value="BROMO"/>
    <property type="match status" value="1"/>
</dbReference>
<dbReference type="SUPFAM" id="SSF47370">
    <property type="entry name" value="Bromodomain"/>
    <property type="match status" value="1"/>
</dbReference>
<dbReference type="PROSITE" id="PS00633">
    <property type="entry name" value="BROMODOMAIN_1"/>
    <property type="match status" value="1"/>
</dbReference>
<dbReference type="PROSITE" id="PS50014">
    <property type="entry name" value="BROMODOMAIN_2"/>
    <property type="match status" value="1"/>
</dbReference>